<comment type="function">
    <text evidence="1">Binds as a heterodimer with protein bS6 to the central domain of the 16S rRNA, where it helps stabilize the platform of the 30S subunit.</text>
</comment>
<comment type="subunit">
    <text evidence="1">Part of the 30S ribosomal subunit. Forms a tight heterodimer with protein bS6.</text>
</comment>
<comment type="similarity">
    <text evidence="1">Belongs to the bacterial ribosomal protein bS18 family.</text>
</comment>
<dbReference type="EMBL" id="CP000509">
    <property type="protein sequence ID" value="ABL84157.1"/>
    <property type="molecule type" value="Genomic_DNA"/>
</dbReference>
<dbReference type="RefSeq" id="WP_011758085.1">
    <property type="nucleotide sequence ID" value="NC_008699.1"/>
</dbReference>
<dbReference type="SMR" id="A1SQS2"/>
<dbReference type="STRING" id="196162.Noca_4662"/>
<dbReference type="KEGG" id="nca:Noca_4662"/>
<dbReference type="eggNOG" id="COG0238">
    <property type="taxonomic scope" value="Bacteria"/>
</dbReference>
<dbReference type="HOGENOM" id="CLU_148710_2_2_11"/>
<dbReference type="OrthoDB" id="9812008at2"/>
<dbReference type="Proteomes" id="UP000000640">
    <property type="component" value="Chromosome"/>
</dbReference>
<dbReference type="GO" id="GO:0022627">
    <property type="term" value="C:cytosolic small ribosomal subunit"/>
    <property type="evidence" value="ECO:0007669"/>
    <property type="project" value="TreeGrafter"/>
</dbReference>
<dbReference type="GO" id="GO:0070181">
    <property type="term" value="F:small ribosomal subunit rRNA binding"/>
    <property type="evidence" value="ECO:0007669"/>
    <property type="project" value="TreeGrafter"/>
</dbReference>
<dbReference type="GO" id="GO:0003735">
    <property type="term" value="F:structural constituent of ribosome"/>
    <property type="evidence" value="ECO:0007669"/>
    <property type="project" value="InterPro"/>
</dbReference>
<dbReference type="GO" id="GO:0006412">
    <property type="term" value="P:translation"/>
    <property type="evidence" value="ECO:0007669"/>
    <property type="project" value="UniProtKB-UniRule"/>
</dbReference>
<dbReference type="FunFam" id="4.10.640.10:FF:000004">
    <property type="entry name" value="30S ribosomal protein S18"/>
    <property type="match status" value="1"/>
</dbReference>
<dbReference type="Gene3D" id="4.10.640.10">
    <property type="entry name" value="Ribosomal protein S18"/>
    <property type="match status" value="1"/>
</dbReference>
<dbReference type="HAMAP" id="MF_00270">
    <property type="entry name" value="Ribosomal_bS18"/>
    <property type="match status" value="1"/>
</dbReference>
<dbReference type="InterPro" id="IPR001648">
    <property type="entry name" value="Ribosomal_bS18"/>
</dbReference>
<dbReference type="InterPro" id="IPR018275">
    <property type="entry name" value="Ribosomal_bS18_CS"/>
</dbReference>
<dbReference type="InterPro" id="IPR036870">
    <property type="entry name" value="Ribosomal_bS18_sf"/>
</dbReference>
<dbReference type="NCBIfam" id="TIGR00165">
    <property type="entry name" value="S18"/>
    <property type="match status" value="1"/>
</dbReference>
<dbReference type="PANTHER" id="PTHR13479">
    <property type="entry name" value="30S RIBOSOMAL PROTEIN S18"/>
    <property type="match status" value="1"/>
</dbReference>
<dbReference type="PANTHER" id="PTHR13479:SF62">
    <property type="entry name" value="SMALL RIBOSOMAL SUBUNIT PROTEIN BS18A"/>
    <property type="match status" value="1"/>
</dbReference>
<dbReference type="Pfam" id="PF01084">
    <property type="entry name" value="Ribosomal_S18"/>
    <property type="match status" value="1"/>
</dbReference>
<dbReference type="PRINTS" id="PR00974">
    <property type="entry name" value="RIBOSOMALS18"/>
</dbReference>
<dbReference type="SUPFAM" id="SSF46911">
    <property type="entry name" value="Ribosomal protein S18"/>
    <property type="match status" value="1"/>
</dbReference>
<dbReference type="PROSITE" id="PS00057">
    <property type="entry name" value="RIBOSOMAL_S18"/>
    <property type="match status" value="1"/>
</dbReference>
<sequence>MAKAVIRKPKKKVCQFCKEKATGVDYKDTALLRKFISDRGKIRARRVTGNCVQHQRDVAIAVKNAREVALLPYTSTGR</sequence>
<reference key="1">
    <citation type="submission" date="2006-12" db="EMBL/GenBank/DDBJ databases">
        <title>Complete sequence of chromosome 1 of Nocardioides sp. JS614.</title>
        <authorList>
            <person name="Copeland A."/>
            <person name="Lucas S."/>
            <person name="Lapidus A."/>
            <person name="Barry K."/>
            <person name="Detter J.C."/>
            <person name="Glavina del Rio T."/>
            <person name="Hammon N."/>
            <person name="Israni S."/>
            <person name="Dalin E."/>
            <person name="Tice H."/>
            <person name="Pitluck S."/>
            <person name="Thompson L.S."/>
            <person name="Brettin T."/>
            <person name="Bruce D."/>
            <person name="Han C."/>
            <person name="Tapia R."/>
            <person name="Schmutz J."/>
            <person name="Larimer F."/>
            <person name="Land M."/>
            <person name="Hauser L."/>
            <person name="Kyrpides N."/>
            <person name="Kim E."/>
            <person name="Mattes T."/>
            <person name="Gossett J."/>
            <person name="Richardson P."/>
        </authorList>
    </citation>
    <scope>NUCLEOTIDE SEQUENCE [LARGE SCALE GENOMIC DNA]</scope>
    <source>
        <strain>ATCC BAA-499 / JS614</strain>
    </source>
</reference>
<gene>
    <name evidence="1" type="primary">rpsR</name>
    <name type="ordered locus">Noca_4662</name>
</gene>
<organism>
    <name type="scientific">Nocardioides sp. (strain ATCC BAA-499 / JS614)</name>
    <dbReference type="NCBI Taxonomy" id="196162"/>
    <lineage>
        <taxon>Bacteria</taxon>
        <taxon>Bacillati</taxon>
        <taxon>Actinomycetota</taxon>
        <taxon>Actinomycetes</taxon>
        <taxon>Propionibacteriales</taxon>
        <taxon>Nocardioidaceae</taxon>
        <taxon>Nocardioides</taxon>
    </lineage>
</organism>
<proteinExistence type="inferred from homology"/>
<protein>
    <recommendedName>
        <fullName evidence="1">Small ribosomal subunit protein bS18</fullName>
    </recommendedName>
    <alternativeName>
        <fullName evidence="2">30S ribosomal protein S18</fullName>
    </alternativeName>
</protein>
<accession>A1SQS2</accession>
<evidence type="ECO:0000255" key="1">
    <source>
        <dbReference type="HAMAP-Rule" id="MF_00270"/>
    </source>
</evidence>
<evidence type="ECO:0000305" key="2"/>
<name>RS18_NOCSJ</name>
<feature type="chain" id="PRO_1000003549" description="Small ribosomal subunit protein bS18">
    <location>
        <begin position="1"/>
        <end position="78"/>
    </location>
</feature>
<keyword id="KW-1185">Reference proteome</keyword>
<keyword id="KW-0687">Ribonucleoprotein</keyword>
<keyword id="KW-0689">Ribosomal protein</keyword>
<keyword id="KW-0694">RNA-binding</keyword>
<keyword id="KW-0699">rRNA-binding</keyword>